<accession>B4TJ27</accession>
<reference key="1">
    <citation type="journal article" date="2011" name="J. Bacteriol.">
        <title>Comparative genomics of 28 Salmonella enterica isolates: evidence for CRISPR-mediated adaptive sublineage evolution.</title>
        <authorList>
            <person name="Fricke W.F."/>
            <person name="Mammel M.K."/>
            <person name="McDermott P.F."/>
            <person name="Tartera C."/>
            <person name="White D.G."/>
            <person name="Leclerc J.E."/>
            <person name="Ravel J."/>
            <person name="Cebula T.A."/>
        </authorList>
    </citation>
    <scope>NUCLEOTIDE SEQUENCE [LARGE SCALE GENOMIC DNA]</scope>
    <source>
        <strain>SL476</strain>
    </source>
</reference>
<dbReference type="EC" id="2.5.1.7" evidence="1"/>
<dbReference type="EMBL" id="CP001120">
    <property type="protein sequence ID" value="ACF66435.1"/>
    <property type="molecule type" value="Genomic_DNA"/>
</dbReference>
<dbReference type="RefSeq" id="WP_000357288.1">
    <property type="nucleotide sequence ID" value="NC_011083.1"/>
</dbReference>
<dbReference type="SMR" id="B4TJ27"/>
<dbReference type="KEGG" id="seh:SeHA_C3604"/>
<dbReference type="HOGENOM" id="CLU_027387_0_0_6"/>
<dbReference type="UniPathway" id="UPA00219"/>
<dbReference type="Proteomes" id="UP000001866">
    <property type="component" value="Chromosome"/>
</dbReference>
<dbReference type="GO" id="GO:0005737">
    <property type="term" value="C:cytoplasm"/>
    <property type="evidence" value="ECO:0007669"/>
    <property type="project" value="UniProtKB-SubCell"/>
</dbReference>
<dbReference type="GO" id="GO:0008760">
    <property type="term" value="F:UDP-N-acetylglucosamine 1-carboxyvinyltransferase activity"/>
    <property type="evidence" value="ECO:0007669"/>
    <property type="project" value="UniProtKB-UniRule"/>
</dbReference>
<dbReference type="GO" id="GO:0051301">
    <property type="term" value="P:cell division"/>
    <property type="evidence" value="ECO:0007669"/>
    <property type="project" value="UniProtKB-KW"/>
</dbReference>
<dbReference type="GO" id="GO:0071555">
    <property type="term" value="P:cell wall organization"/>
    <property type="evidence" value="ECO:0007669"/>
    <property type="project" value="UniProtKB-KW"/>
</dbReference>
<dbReference type="GO" id="GO:0009252">
    <property type="term" value="P:peptidoglycan biosynthetic process"/>
    <property type="evidence" value="ECO:0007669"/>
    <property type="project" value="UniProtKB-UniRule"/>
</dbReference>
<dbReference type="GO" id="GO:0008360">
    <property type="term" value="P:regulation of cell shape"/>
    <property type="evidence" value="ECO:0007669"/>
    <property type="project" value="UniProtKB-KW"/>
</dbReference>
<dbReference type="GO" id="GO:0019277">
    <property type="term" value="P:UDP-N-acetylgalactosamine biosynthetic process"/>
    <property type="evidence" value="ECO:0007669"/>
    <property type="project" value="InterPro"/>
</dbReference>
<dbReference type="CDD" id="cd01555">
    <property type="entry name" value="UdpNAET"/>
    <property type="match status" value="1"/>
</dbReference>
<dbReference type="FunFam" id="3.65.10.10:FF:000002">
    <property type="entry name" value="UDP-N-acetylglucosamine 1-carboxyvinyltransferase"/>
    <property type="match status" value="1"/>
</dbReference>
<dbReference type="Gene3D" id="3.65.10.10">
    <property type="entry name" value="Enolpyruvate transferase domain"/>
    <property type="match status" value="2"/>
</dbReference>
<dbReference type="HAMAP" id="MF_00111">
    <property type="entry name" value="MurA"/>
    <property type="match status" value="1"/>
</dbReference>
<dbReference type="InterPro" id="IPR001986">
    <property type="entry name" value="Enolpyruvate_Tfrase_dom"/>
</dbReference>
<dbReference type="InterPro" id="IPR036968">
    <property type="entry name" value="Enolpyruvate_Tfrase_sf"/>
</dbReference>
<dbReference type="InterPro" id="IPR050068">
    <property type="entry name" value="MurA_subfamily"/>
</dbReference>
<dbReference type="InterPro" id="IPR013792">
    <property type="entry name" value="RNA3'P_cycl/enolpyr_Trfase_a/b"/>
</dbReference>
<dbReference type="InterPro" id="IPR005750">
    <property type="entry name" value="UDP_GlcNAc_COvinyl_MurA"/>
</dbReference>
<dbReference type="NCBIfam" id="TIGR01072">
    <property type="entry name" value="murA"/>
    <property type="match status" value="1"/>
</dbReference>
<dbReference type="NCBIfam" id="NF006873">
    <property type="entry name" value="PRK09369.1"/>
    <property type="match status" value="1"/>
</dbReference>
<dbReference type="PANTHER" id="PTHR43783">
    <property type="entry name" value="UDP-N-ACETYLGLUCOSAMINE 1-CARBOXYVINYLTRANSFERASE"/>
    <property type="match status" value="1"/>
</dbReference>
<dbReference type="PANTHER" id="PTHR43783:SF1">
    <property type="entry name" value="UDP-N-ACETYLGLUCOSAMINE 1-CARBOXYVINYLTRANSFERASE"/>
    <property type="match status" value="1"/>
</dbReference>
<dbReference type="Pfam" id="PF00275">
    <property type="entry name" value="EPSP_synthase"/>
    <property type="match status" value="1"/>
</dbReference>
<dbReference type="SUPFAM" id="SSF55205">
    <property type="entry name" value="EPT/RTPC-like"/>
    <property type="match status" value="1"/>
</dbReference>
<evidence type="ECO:0000255" key="1">
    <source>
        <dbReference type="HAMAP-Rule" id="MF_00111"/>
    </source>
</evidence>
<keyword id="KW-0131">Cell cycle</keyword>
<keyword id="KW-0132">Cell division</keyword>
<keyword id="KW-0133">Cell shape</keyword>
<keyword id="KW-0961">Cell wall biogenesis/degradation</keyword>
<keyword id="KW-0963">Cytoplasm</keyword>
<keyword id="KW-0573">Peptidoglycan synthesis</keyword>
<keyword id="KW-0670">Pyruvate</keyword>
<keyword id="KW-0808">Transferase</keyword>
<organism>
    <name type="scientific">Salmonella heidelberg (strain SL476)</name>
    <dbReference type="NCBI Taxonomy" id="454169"/>
    <lineage>
        <taxon>Bacteria</taxon>
        <taxon>Pseudomonadati</taxon>
        <taxon>Pseudomonadota</taxon>
        <taxon>Gammaproteobacteria</taxon>
        <taxon>Enterobacterales</taxon>
        <taxon>Enterobacteriaceae</taxon>
        <taxon>Salmonella</taxon>
    </lineage>
</organism>
<name>MURA_SALHS</name>
<proteinExistence type="inferred from homology"/>
<comment type="function">
    <text evidence="1">Cell wall formation. Adds enolpyruvyl to UDP-N-acetylglucosamine.</text>
</comment>
<comment type="catalytic activity">
    <reaction evidence="1">
        <text>phosphoenolpyruvate + UDP-N-acetyl-alpha-D-glucosamine = UDP-N-acetyl-3-O-(1-carboxyvinyl)-alpha-D-glucosamine + phosphate</text>
        <dbReference type="Rhea" id="RHEA:18681"/>
        <dbReference type="ChEBI" id="CHEBI:43474"/>
        <dbReference type="ChEBI" id="CHEBI:57705"/>
        <dbReference type="ChEBI" id="CHEBI:58702"/>
        <dbReference type="ChEBI" id="CHEBI:68483"/>
        <dbReference type="EC" id="2.5.1.7"/>
    </reaction>
</comment>
<comment type="pathway">
    <text evidence="1">Cell wall biogenesis; peptidoglycan biosynthesis.</text>
</comment>
<comment type="subcellular location">
    <subcellularLocation>
        <location evidence="1">Cytoplasm</location>
    </subcellularLocation>
</comment>
<comment type="similarity">
    <text evidence="1">Belongs to the EPSP synthase family. MurA subfamily.</text>
</comment>
<sequence>MDKFRVQGPTTLQGEVTISGAKNAALPILFAALLAEEPVEIQNVPKLKDVDTSMKLLSQLGAKVERNGSVHIDASQVNVFCAPYDLVKTMRASIWALGPLVARFGQGQVSLPGGCTIGARPVDLHITGLEQLGATIKLEEGYVKASVEGRLKGAHIVMDKVSVGATVTIMCAATLAEGTTIIENAAREPEIVDTANFLVTLGAKIAGQGTDRITIEGVERLGGGVYRVLPDRIETGTFLVAAAISRGKILCRNAQPDTLDAVLAKLRDAGADIEVGEDWISLDMHGKRPKAVNVRTAPHPAFPTDMQAQFTLLNLVAEGTGFITETVFENRFMHVPELSRMGARAEIESNTVICHGVETLSGAQVMATDLRASASLVLAGCIAEGTTIVDRIYHIDRGYERIEDKLRALGANIERVKGE</sequence>
<gene>
    <name evidence="1" type="primary">murA</name>
    <name type="ordered locus">SeHA_C3604</name>
</gene>
<protein>
    <recommendedName>
        <fullName evidence="1">UDP-N-acetylglucosamine 1-carboxyvinyltransferase</fullName>
        <ecNumber evidence="1">2.5.1.7</ecNumber>
    </recommendedName>
    <alternativeName>
        <fullName evidence="1">Enoylpyruvate transferase</fullName>
    </alternativeName>
    <alternativeName>
        <fullName evidence="1">UDP-N-acetylglucosamine enolpyruvyl transferase</fullName>
        <shortName evidence="1">EPT</shortName>
    </alternativeName>
</protein>
<feature type="chain" id="PRO_1000094720" description="UDP-N-acetylglucosamine 1-carboxyvinyltransferase">
    <location>
        <begin position="1"/>
        <end position="419"/>
    </location>
</feature>
<feature type="active site" description="Proton donor" evidence="1">
    <location>
        <position position="115"/>
    </location>
</feature>
<feature type="binding site" evidence="1">
    <location>
        <begin position="22"/>
        <end position="23"/>
    </location>
    <ligand>
        <name>phosphoenolpyruvate</name>
        <dbReference type="ChEBI" id="CHEBI:58702"/>
    </ligand>
</feature>
<feature type="binding site" evidence="1">
    <location>
        <position position="91"/>
    </location>
    <ligand>
        <name>UDP-N-acetyl-alpha-D-glucosamine</name>
        <dbReference type="ChEBI" id="CHEBI:57705"/>
    </ligand>
</feature>
<feature type="binding site" evidence="1">
    <location>
        <begin position="120"/>
        <end position="124"/>
    </location>
    <ligand>
        <name>UDP-N-acetyl-alpha-D-glucosamine</name>
        <dbReference type="ChEBI" id="CHEBI:57705"/>
    </ligand>
</feature>
<feature type="binding site" evidence="1">
    <location>
        <begin position="160"/>
        <end position="163"/>
    </location>
    <ligand>
        <name>UDP-N-acetyl-alpha-D-glucosamine</name>
        <dbReference type="ChEBI" id="CHEBI:57705"/>
    </ligand>
</feature>
<feature type="binding site" evidence="1">
    <location>
        <position position="305"/>
    </location>
    <ligand>
        <name>UDP-N-acetyl-alpha-D-glucosamine</name>
        <dbReference type="ChEBI" id="CHEBI:57705"/>
    </ligand>
</feature>
<feature type="binding site" evidence="1">
    <location>
        <position position="327"/>
    </location>
    <ligand>
        <name>UDP-N-acetyl-alpha-D-glucosamine</name>
        <dbReference type="ChEBI" id="CHEBI:57705"/>
    </ligand>
</feature>
<feature type="modified residue" description="2-(S-cysteinyl)pyruvic acid O-phosphothioketal" evidence="1">
    <location>
        <position position="115"/>
    </location>
</feature>